<organism>
    <name type="scientific">Escherichia coli O127:H6 (strain E2348/69 / EPEC)</name>
    <dbReference type="NCBI Taxonomy" id="574521"/>
    <lineage>
        <taxon>Bacteria</taxon>
        <taxon>Pseudomonadati</taxon>
        <taxon>Pseudomonadota</taxon>
        <taxon>Gammaproteobacteria</taxon>
        <taxon>Enterobacterales</taxon>
        <taxon>Enterobacteriaceae</taxon>
        <taxon>Escherichia</taxon>
    </lineage>
</organism>
<feature type="chain" id="PRO_1000135502" description="Ubiquinone biosynthesis O-methyltransferase">
    <location>
        <begin position="1"/>
        <end position="240"/>
    </location>
</feature>
<feature type="binding site" evidence="1">
    <location>
        <position position="44"/>
    </location>
    <ligand>
        <name>S-adenosyl-L-methionine</name>
        <dbReference type="ChEBI" id="CHEBI:59789"/>
    </ligand>
</feature>
<feature type="binding site" evidence="1">
    <location>
        <position position="64"/>
    </location>
    <ligand>
        <name>S-adenosyl-L-methionine</name>
        <dbReference type="ChEBI" id="CHEBI:59789"/>
    </ligand>
</feature>
<feature type="binding site" evidence="1">
    <location>
        <position position="85"/>
    </location>
    <ligand>
        <name>S-adenosyl-L-methionine</name>
        <dbReference type="ChEBI" id="CHEBI:59789"/>
    </ligand>
</feature>
<feature type="binding site" evidence="1">
    <location>
        <position position="129"/>
    </location>
    <ligand>
        <name>S-adenosyl-L-methionine</name>
        <dbReference type="ChEBI" id="CHEBI:59789"/>
    </ligand>
</feature>
<reference key="1">
    <citation type="journal article" date="2009" name="J. Bacteriol.">
        <title>Complete genome sequence and comparative genome analysis of enteropathogenic Escherichia coli O127:H6 strain E2348/69.</title>
        <authorList>
            <person name="Iguchi A."/>
            <person name="Thomson N.R."/>
            <person name="Ogura Y."/>
            <person name="Saunders D."/>
            <person name="Ooka T."/>
            <person name="Henderson I.R."/>
            <person name="Harris D."/>
            <person name="Asadulghani M."/>
            <person name="Kurokawa K."/>
            <person name="Dean P."/>
            <person name="Kenny B."/>
            <person name="Quail M.A."/>
            <person name="Thurston S."/>
            <person name="Dougan G."/>
            <person name="Hayashi T."/>
            <person name="Parkhill J."/>
            <person name="Frankel G."/>
        </authorList>
    </citation>
    <scope>NUCLEOTIDE SEQUENCE [LARGE SCALE GENOMIC DNA]</scope>
    <source>
        <strain>E2348/69 / EPEC</strain>
    </source>
</reference>
<proteinExistence type="inferred from homology"/>
<dbReference type="EC" id="2.1.1.222" evidence="1"/>
<dbReference type="EC" id="2.1.1.64" evidence="1"/>
<dbReference type="EMBL" id="FM180568">
    <property type="protein sequence ID" value="CAS09924.1"/>
    <property type="molecule type" value="Genomic_DNA"/>
</dbReference>
<dbReference type="RefSeq" id="WP_000990770.1">
    <property type="nucleotide sequence ID" value="NC_011601.1"/>
</dbReference>
<dbReference type="SMR" id="B7UFP4"/>
<dbReference type="KEGG" id="ecg:E2348C_2376"/>
<dbReference type="HOGENOM" id="CLU_042432_5_0_6"/>
<dbReference type="UniPathway" id="UPA00232"/>
<dbReference type="Proteomes" id="UP000008205">
    <property type="component" value="Chromosome"/>
</dbReference>
<dbReference type="GO" id="GO:0102208">
    <property type="term" value="F:2-polyprenyl-6-hydroxyphenol methylase activity"/>
    <property type="evidence" value="ECO:0007669"/>
    <property type="project" value="UniProtKB-EC"/>
</dbReference>
<dbReference type="GO" id="GO:0061542">
    <property type="term" value="F:3-demethylubiquinol 3-O-methyltransferase activity"/>
    <property type="evidence" value="ECO:0007669"/>
    <property type="project" value="UniProtKB-UniRule"/>
</dbReference>
<dbReference type="GO" id="GO:0010420">
    <property type="term" value="F:polyprenyldihydroxybenzoate methyltransferase activity"/>
    <property type="evidence" value="ECO:0007669"/>
    <property type="project" value="InterPro"/>
</dbReference>
<dbReference type="GO" id="GO:0032259">
    <property type="term" value="P:methylation"/>
    <property type="evidence" value="ECO:0007669"/>
    <property type="project" value="UniProtKB-KW"/>
</dbReference>
<dbReference type="CDD" id="cd02440">
    <property type="entry name" value="AdoMet_MTases"/>
    <property type="match status" value="1"/>
</dbReference>
<dbReference type="FunFam" id="3.40.50.150:FF:000028">
    <property type="entry name" value="Ubiquinone biosynthesis O-methyltransferase"/>
    <property type="match status" value="1"/>
</dbReference>
<dbReference type="Gene3D" id="3.40.50.150">
    <property type="entry name" value="Vaccinia Virus protein VP39"/>
    <property type="match status" value="1"/>
</dbReference>
<dbReference type="HAMAP" id="MF_00472">
    <property type="entry name" value="UbiG"/>
    <property type="match status" value="1"/>
</dbReference>
<dbReference type="InterPro" id="IPR029063">
    <property type="entry name" value="SAM-dependent_MTases_sf"/>
</dbReference>
<dbReference type="InterPro" id="IPR010233">
    <property type="entry name" value="UbiG_MeTrfase"/>
</dbReference>
<dbReference type="NCBIfam" id="TIGR01983">
    <property type="entry name" value="UbiG"/>
    <property type="match status" value="1"/>
</dbReference>
<dbReference type="PANTHER" id="PTHR43464">
    <property type="entry name" value="METHYLTRANSFERASE"/>
    <property type="match status" value="1"/>
</dbReference>
<dbReference type="PANTHER" id="PTHR43464:SF19">
    <property type="entry name" value="UBIQUINONE BIOSYNTHESIS O-METHYLTRANSFERASE, MITOCHONDRIAL"/>
    <property type="match status" value="1"/>
</dbReference>
<dbReference type="Pfam" id="PF13489">
    <property type="entry name" value="Methyltransf_23"/>
    <property type="match status" value="1"/>
</dbReference>
<dbReference type="SUPFAM" id="SSF53335">
    <property type="entry name" value="S-adenosyl-L-methionine-dependent methyltransferases"/>
    <property type="match status" value="1"/>
</dbReference>
<name>UBIG_ECO27</name>
<gene>
    <name evidence="1" type="primary">ubiG</name>
    <name type="ordered locus">E2348C_2376</name>
</gene>
<sequence length="240" mass="26600">MNAEKSPVNHNVDHEEIAKFEAVASRWWDLEGEFKPLHRINPLRLGYIAERAGGLFGKKVLDVGCGGGILAESMAREGATVTGLDMGFEPLQVAKLHALESGIQVDYVQETVEEHAAKYAGQYDVVTCMEMLEHVPDPQSVVRACAQLVKPGGDVFFSTLNRNGKSWLMAVVGAEYILRMVPKGTHDVKKFIKPAELLGWVDQTSLKERHMTGLHYNPITNTFKLGPGVDVNYMLHTQNK</sequence>
<accession>B7UFP4</accession>
<keyword id="KW-0489">Methyltransferase</keyword>
<keyword id="KW-1185">Reference proteome</keyword>
<keyword id="KW-0949">S-adenosyl-L-methionine</keyword>
<keyword id="KW-0808">Transferase</keyword>
<keyword id="KW-0831">Ubiquinone biosynthesis</keyword>
<evidence type="ECO:0000255" key="1">
    <source>
        <dbReference type="HAMAP-Rule" id="MF_00472"/>
    </source>
</evidence>
<protein>
    <recommendedName>
        <fullName evidence="1">Ubiquinone biosynthesis O-methyltransferase</fullName>
    </recommendedName>
    <alternativeName>
        <fullName evidence="1">2-octaprenyl-6-hydroxyphenol methylase</fullName>
        <ecNumber evidence="1">2.1.1.222</ecNumber>
    </alternativeName>
    <alternativeName>
        <fullName evidence="1">3-demethylubiquinone-8 3-O-methyltransferase</fullName>
        <ecNumber evidence="1">2.1.1.64</ecNumber>
    </alternativeName>
</protein>
<comment type="function">
    <text evidence="1">O-methyltransferase that catalyzes the 2 O-methylation steps in the ubiquinone biosynthetic pathway.</text>
</comment>
<comment type="catalytic activity">
    <reaction evidence="1">
        <text>a 3-demethylubiquinol + S-adenosyl-L-methionine = a ubiquinol + S-adenosyl-L-homocysteine + H(+)</text>
        <dbReference type="Rhea" id="RHEA:44380"/>
        <dbReference type="Rhea" id="RHEA-COMP:9566"/>
        <dbReference type="Rhea" id="RHEA-COMP:10914"/>
        <dbReference type="ChEBI" id="CHEBI:15378"/>
        <dbReference type="ChEBI" id="CHEBI:17976"/>
        <dbReference type="ChEBI" id="CHEBI:57856"/>
        <dbReference type="ChEBI" id="CHEBI:59789"/>
        <dbReference type="ChEBI" id="CHEBI:84422"/>
        <dbReference type="EC" id="2.1.1.64"/>
    </reaction>
</comment>
<comment type="catalytic activity">
    <reaction evidence="1">
        <text>a 3-(all-trans-polyprenyl)benzene-1,2-diol + S-adenosyl-L-methionine = a 2-methoxy-6-(all-trans-polyprenyl)phenol + S-adenosyl-L-homocysteine + H(+)</text>
        <dbReference type="Rhea" id="RHEA:31411"/>
        <dbReference type="Rhea" id="RHEA-COMP:9550"/>
        <dbReference type="Rhea" id="RHEA-COMP:9551"/>
        <dbReference type="ChEBI" id="CHEBI:15378"/>
        <dbReference type="ChEBI" id="CHEBI:57856"/>
        <dbReference type="ChEBI" id="CHEBI:59789"/>
        <dbReference type="ChEBI" id="CHEBI:62729"/>
        <dbReference type="ChEBI" id="CHEBI:62731"/>
        <dbReference type="EC" id="2.1.1.222"/>
    </reaction>
</comment>
<comment type="pathway">
    <text evidence="1">Cofactor biosynthesis; ubiquinone biosynthesis.</text>
</comment>
<comment type="similarity">
    <text evidence="1">Belongs to the methyltransferase superfamily. UbiG/COQ3 family.</text>
</comment>